<gene>
    <name type="ordered locus">TON_1078</name>
</gene>
<sequence>MLVLASASPRRREILGRFIKDFKVVPSNVSEECSLTEPRTYALELARRKAREVYNRVGGTVIGADTAVSIDGHILGKPGSEEEAYRMLKLLSGRVHRVTTGYCIIHEGEEVSGAVVTEVKFRELSDELIWAYIRTGEPMDKAGAYGIQGKGGLFVEWINGDYYNVVGFPLEIVWKLRELGFGVM</sequence>
<accession>B6YWV3</accession>
<protein>
    <recommendedName>
        <fullName evidence="1">dTTP/UTP pyrophosphatase</fullName>
        <shortName evidence="1">dTTPase/UTPase</shortName>
        <ecNumber evidence="1">3.6.1.9</ecNumber>
    </recommendedName>
    <alternativeName>
        <fullName evidence="1">Nucleoside triphosphate pyrophosphatase</fullName>
    </alternativeName>
    <alternativeName>
        <fullName evidence="1">Nucleotide pyrophosphatase</fullName>
        <shortName evidence="1">Nucleotide PPase</shortName>
    </alternativeName>
</protein>
<evidence type="ECO:0000255" key="1">
    <source>
        <dbReference type="HAMAP-Rule" id="MF_00528"/>
    </source>
</evidence>
<organism>
    <name type="scientific">Thermococcus onnurineus (strain NA1)</name>
    <dbReference type="NCBI Taxonomy" id="523850"/>
    <lineage>
        <taxon>Archaea</taxon>
        <taxon>Methanobacteriati</taxon>
        <taxon>Methanobacteriota</taxon>
        <taxon>Thermococci</taxon>
        <taxon>Thermococcales</taxon>
        <taxon>Thermococcaceae</taxon>
        <taxon>Thermococcus</taxon>
    </lineage>
</organism>
<reference key="1">
    <citation type="journal article" date="2008" name="J. Bacteriol.">
        <title>The complete genome sequence of Thermococcus onnurineus NA1 reveals a mixed heterotrophic and carboxydotrophic metabolism.</title>
        <authorList>
            <person name="Lee H.S."/>
            <person name="Kang S.G."/>
            <person name="Bae S.S."/>
            <person name="Lim J.K."/>
            <person name="Cho Y."/>
            <person name="Kim Y.J."/>
            <person name="Jeon J.H."/>
            <person name="Cha S.-S."/>
            <person name="Kwon K.K."/>
            <person name="Kim H.-T."/>
            <person name="Park C.-J."/>
            <person name="Lee H.-W."/>
            <person name="Kim S.I."/>
            <person name="Chun J."/>
            <person name="Colwell R.R."/>
            <person name="Kim S.-J."/>
            <person name="Lee J.-H."/>
        </authorList>
    </citation>
    <scope>NUCLEOTIDE SEQUENCE [LARGE SCALE GENOMIC DNA]</scope>
    <source>
        <strain>NA1</strain>
    </source>
</reference>
<feature type="chain" id="PRO_1000127799" description="dTTP/UTP pyrophosphatase">
    <location>
        <begin position="1"/>
        <end position="184"/>
    </location>
</feature>
<feature type="active site" description="Proton acceptor" evidence="1">
    <location>
        <position position="65"/>
    </location>
</feature>
<feature type="site" description="Important for substrate specificity" evidence="1">
    <location>
        <position position="10"/>
    </location>
</feature>
<feature type="site" description="Important for substrate specificity" evidence="1">
    <location>
        <position position="66"/>
    </location>
</feature>
<feature type="site" description="Important for substrate specificity" evidence="1">
    <location>
        <position position="148"/>
    </location>
</feature>
<dbReference type="EC" id="3.6.1.9" evidence="1"/>
<dbReference type="EMBL" id="CP000855">
    <property type="protein sequence ID" value="ACJ16566.1"/>
    <property type="molecule type" value="Genomic_DNA"/>
</dbReference>
<dbReference type="RefSeq" id="WP_012572038.1">
    <property type="nucleotide sequence ID" value="NC_011529.1"/>
</dbReference>
<dbReference type="SMR" id="B6YWV3"/>
<dbReference type="STRING" id="523850.TON_1078"/>
<dbReference type="GeneID" id="7018100"/>
<dbReference type="KEGG" id="ton:TON_1078"/>
<dbReference type="PATRIC" id="fig|523850.10.peg.1086"/>
<dbReference type="eggNOG" id="arCOG05007">
    <property type="taxonomic scope" value="Archaea"/>
</dbReference>
<dbReference type="HOGENOM" id="CLU_040416_2_1_2"/>
<dbReference type="OrthoDB" id="45223at2157"/>
<dbReference type="Proteomes" id="UP000002727">
    <property type="component" value="Chromosome"/>
</dbReference>
<dbReference type="GO" id="GO:0005737">
    <property type="term" value="C:cytoplasm"/>
    <property type="evidence" value="ECO:0007669"/>
    <property type="project" value="UniProtKB-SubCell"/>
</dbReference>
<dbReference type="GO" id="GO:0036218">
    <property type="term" value="F:dTTP diphosphatase activity"/>
    <property type="evidence" value="ECO:0007669"/>
    <property type="project" value="RHEA"/>
</dbReference>
<dbReference type="GO" id="GO:0036221">
    <property type="term" value="F:UTP diphosphatase activity"/>
    <property type="evidence" value="ECO:0007669"/>
    <property type="project" value="RHEA"/>
</dbReference>
<dbReference type="GO" id="GO:0009117">
    <property type="term" value="P:nucleotide metabolic process"/>
    <property type="evidence" value="ECO:0007669"/>
    <property type="project" value="UniProtKB-KW"/>
</dbReference>
<dbReference type="CDD" id="cd00555">
    <property type="entry name" value="Maf"/>
    <property type="match status" value="1"/>
</dbReference>
<dbReference type="Gene3D" id="3.90.950.10">
    <property type="match status" value="1"/>
</dbReference>
<dbReference type="HAMAP" id="MF_00528">
    <property type="entry name" value="Maf"/>
    <property type="match status" value="1"/>
</dbReference>
<dbReference type="InterPro" id="IPR029001">
    <property type="entry name" value="ITPase-like_fam"/>
</dbReference>
<dbReference type="InterPro" id="IPR003697">
    <property type="entry name" value="Maf-like"/>
</dbReference>
<dbReference type="NCBIfam" id="TIGR00172">
    <property type="entry name" value="maf"/>
    <property type="match status" value="1"/>
</dbReference>
<dbReference type="PANTHER" id="PTHR43213">
    <property type="entry name" value="BIFUNCTIONAL DTTP/UTP PYROPHOSPHATASE/METHYLTRANSFERASE PROTEIN-RELATED"/>
    <property type="match status" value="1"/>
</dbReference>
<dbReference type="PANTHER" id="PTHR43213:SF5">
    <property type="entry name" value="BIFUNCTIONAL DTTP_UTP PYROPHOSPHATASE_METHYLTRANSFERASE PROTEIN-RELATED"/>
    <property type="match status" value="1"/>
</dbReference>
<dbReference type="Pfam" id="PF02545">
    <property type="entry name" value="Maf"/>
    <property type="match status" value="1"/>
</dbReference>
<dbReference type="PIRSF" id="PIRSF006305">
    <property type="entry name" value="Maf"/>
    <property type="match status" value="1"/>
</dbReference>
<dbReference type="SUPFAM" id="SSF52972">
    <property type="entry name" value="ITPase-like"/>
    <property type="match status" value="1"/>
</dbReference>
<name>NTPPA_THEON</name>
<comment type="function">
    <text evidence="1">Nucleoside triphosphate pyrophosphatase that hydrolyzes dTTP and UTP. May have a dual role in cell division arrest and in preventing the incorporation of modified nucleotides into cellular nucleic acids.</text>
</comment>
<comment type="catalytic activity">
    <reaction evidence="1">
        <text>dTTP + H2O = dTMP + diphosphate + H(+)</text>
        <dbReference type="Rhea" id="RHEA:28534"/>
        <dbReference type="ChEBI" id="CHEBI:15377"/>
        <dbReference type="ChEBI" id="CHEBI:15378"/>
        <dbReference type="ChEBI" id="CHEBI:33019"/>
        <dbReference type="ChEBI" id="CHEBI:37568"/>
        <dbReference type="ChEBI" id="CHEBI:63528"/>
        <dbReference type="EC" id="3.6.1.9"/>
    </reaction>
</comment>
<comment type="catalytic activity">
    <reaction evidence="1">
        <text>UTP + H2O = UMP + diphosphate + H(+)</text>
        <dbReference type="Rhea" id="RHEA:29395"/>
        <dbReference type="ChEBI" id="CHEBI:15377"/>
        <dbReference type="ChEBI" id="CHEBI:15378"/>
        <dbReference type="ChEBI" id="CHEBI:33019"/>
        <dbReference type="ChEBI" id="CHEBI:46398"/>
        <dbReference type="ChEBI" id="CHEBI:57865"/>
        <dbReference type="EC" id="3.6.1.9"/>
    </reaction>
</comment>
<comment type="cofactor">
    <cofactor evidence="1">
        <name>a divalent metal cation</name>
        <dbReference type="ChEBI" id="CHEBI:60240"/>
    </cofactor>
</comment>
<comment type="subcellular location">
    <subcellularLocation>
        <location evidence="1">Cytoplasm</location>
    </subcellularLocation>
</comment>
<comment type="similarity">
    <text evidence="1">Belongs to the Maf family. YhdE subfamily.</text>
</comment>
<keyword id="KW-0963">Cytoplasm</keyword>
<keyword id="KW-0378">Hydrolase</keyword>
<keyword id="KW-0546">Nucleotide metabolism</keyword>
<proteinExistence type="inferred from homology"/>